<name>MF6LB_XENLA</name>
<sequence length="614" mass="68973">MSSTKQWDISKALAVATLFHFFHNVGKFCLMPFLTLYFRQLGLGASLVGIIIGFKHAVHLLWAPLCSFLAKSHRKRRFFIMASLLLSAGAGGLFAFYPPLDKNIVSLFCNTSMPWKEQLNPPIDISVFVDENISTTYATPTNHQTTNGEFNTFPSSVAEVAIDTTMASSLDMKTTTHQRFTDQFPSSSPLTRNKRLEHQTRKVLGSGKAQKANSSKSSASNSKQRSSLNNQTAPFATHPNVSHRPSIHERKVRDISIDFTDSFLDPKHKIFLIVLAMVIIWEILAAPLEWIADDSLYEYLDFVDATDRHGKLWIWGYLGASMGSIFITFLIDNLNCFVIFDIPRVSFHFFCYGGFLISTFFLSTLYPVHVSKKTEHSNKTVKALGFLGSDGRIVLTALTVFVLGAVGSTIQNFLFWQMQDIGSNELYMGLSIAAGLLSELALYFFRNKLLKTLTFKWMVVLGLLSLGIQFLYYSFLWTPWSVVAIQILNAFSSGVIWWAINSQVVDVASPGTERSLQLTLRWLAYGCGSSAGSFASGFIISRFSLAVLYQACCITLLTWIVIFLLVQPKLPNIKKINYSRLLAADNSDMSDSDEEQDRDWLVTAMKDENSNRKW</sequence>
<organism>
    <name type="scientific">Xenopus laevis</name>
    <name type="common">African clawed frog</name>
    <dbReference type="NCBI Taxonomy" id="8355"/>
    <lineage>
        <taxon>Eukaryota</taxon>
        <taxon>Metazoa</taxon>
        <taxon>Chordata</taxon>
        <taxon>Craniata</taxon>
        <taxon>Vertebrata</taxon>
        <taxon>Euteleostomi</taxon>
        <taxon>Amphibia</taxon>
        <taxon>Batrachia</taxon>
        <taxon>Anura</taxon>
        <taxon>Pipoidea</taxon>
        <taxon>Pipidae</taxon>
        <taxon>Xenopodinae</taxon>
        <taxon>Xenopus</taxon>
        <taxon>Xenopus</taxon>
    </lineage>
</organism>
<comment type="subcellular location">
    <subcellularLocation>
        <location evidence="3">Membrane</location>
        <topology evidence="3">Multi-pass membrane protein</topology>
    </subcellularLocation>
</comment>
<comment type="similarity">
    <text evidence="3">Belongs to the major facilitator superfamily. MFSD6 family.</text>
</comment>
<protein>
    <recommendedName>
        <fullName>Major facilitator superfamily domain-containing protein 6-like protein B</fullName>
    </recommendedName>
</protein>
<keyword id="KW-0472">Membrane</keyword>
<keyword id="KW-1185">Reference proteome</keyword>
<keyword id="KW-0812">Transmembrane</keyword>
<keyword id="KW-1133">Transmembrane helix</keyword>
<reference key="1">
    <citation type="submission" date="2004-10" db="EMBL/GenBank/DDBJ databases">
        <authorList>
            <consortium name="NIH - Xenopus Gene Collection (XGC) project"/>
        </authorList>
    </citation>
    <scope>NUCLEOTIDE SEQUENCE [LARGE SCALE MRNA]</scope>
    <source>
        <tissue>Embryo</tissue>
    </source>
</reference>
<evidence type="ECO:0000255" key="1"/>
<evidence type="ECO:0000256" key="2">
    <source>
        <dbReference type="SAM" id="MobiDB-lite"/>
    </source>
</evidence>
<evidence type="ECO:0000305" key="3"/>
<feature type="chain" id="PRO_0000321948" description="Major facilitator superfamily domain-containing protein 6-like protein B">
    <location>
        <begin position="1"/>
        <end position="614"/>
    </location>
</feature>
<feature type="transmembrane region" description="Helical" evidence="1">
    <location>
        <begin position="41"/>
        <end position="61"/>
    </location>
</feature>
<feature type="transmembrane region" description="Helical" evidence="1">
    <location>
        <begin position="78"/>
        <end position="98"/>
    </location>
</feature>
<feature type="transmembrane region" description="Helical" evidence="1">
    <location>
        <begin position="270"/>
        <end position="290"/>
    </location>
</feature>
<feature type="transmembrane region" description="Helical" evidence="1">
    <location>
        <begin position="312"/>
        <end position="332"/>
    </location>
</feature>
<feature type="transmembrane region" description="Helical" evidence="1">
    <location>
        <begin position="345"/>
        <end position="365"/>
    </location>
</feature>
<feature type="transmembrane region" description="Helical" evidence="1">
    <location>
        <begin position="393"/>
        <end position="413"/>
    </location>
</feature>
<feature type="transmembrane region" description="Helical" evidence="1">
    <location>
        <begin position="425"/>
        <end position="445"/>
    </location>
</feature>
<feature type="transmembrane region" description="Helical" evidence="1">
    <location>
        <begin position="457"/>
        <end position="477"/>
    </location>
</feature>
<feature type="transmembrane region" description="Helical" evidence="1">
    <location>
        <begin position="480"/>
        <end position="500"/>
    </location>
</feature>
<feature type="transmembrane region" description="Helical" evidence="1">
    <location>
        <begin position="520"/>
        <end position="540"/>
    </location>
</feature>
<feature type="transmembrane region" description="Helical" evidence="1">
    <location>
        <begin position="546"/>
        <end position="566"/>
    </location>
</feature>
<feature type="region of interest" description="Disordered" evidence="2">
    <location>
        <begin position="177"/>
        <end position="243"/>
    </location>
</feature>
<feature type="compositionally biased region" description="Polar residues" evidence="2">
    <location>
        <begin position="177"/>
        <end position="191"/>
    </location>
</feature>
<feature type="compositionally biased region" description="Low complexity" evidence="2">
    <location>
        <begin position="205"/>
        <end position="227"/>
    </location>
</feature>
<accession>Q5XGZ9</accession>
<dbReference type="EMBL" id="BC084277">
    <property type="protein sequence ID" value="AAH84277.1"/>
    <property type="molecule type" value="mRNA"/>
</dbReference>
<dbReference type="RefSeq" id="NP_001088272.1">
    <property type="nucleotide sequence ID" value="NM_001094803.1"/>
</dbReference>
<dbReference type="DNASU" id="495104"/>
<dbReference type="GeneID" id="495104"/>
<dbReference type="KEGG" id="xla:495104"/>
<dbReference type="AGR" id="Xenbase:XB-GENE-6254319"/>
<dbReference type="CTD" id="495104"/>
<dbReference type="OMA" id="FGNCAVG"/>
<dbReference type="OrthoDB" id="515887at2759"/>
<dbReference type="Proteomes" id="UP000186698">
    <property type="component" value="Chromosome 9_10L"/>
</dbReference>
<dbReference type="Bgee" id="495104">
    <property type="expression patterns" value="Expressed in oocyte and 17 other cell types or tissues"/>
</dbReference>
<dbReference type="GO" id="GO:0016020">
    <property type="term" value="C:membrane"/>
    <property type="evidence" value="ECO:0000318"/>
    <property type="project" value="GO_Central"/>
</dbReference>
<dbReference type="CDD" id="cd17479">
    <property type="entry name" value="MFS_MFSD6L"/>
    <property type="match status" value="1"/>
</dbReference>
<dbReference type="Gene3D" id="1.20.1250.20">
    <property type="entry name" value="MFS general substrate transporter like domains"/>
    <property type="match status" value="2"/>
</dbReference>
<dbReference type="InterPro" id="IPR024989">
    <property type="entry name" value="MFS_assoc_dom"/>
</dbReference>
<dbReference type="InterPro" id="IPR051717">
    <property type="entry name" value="MFS_MFSD6"/>
</dbReference>
<dbReference type="InterPro" id="IPR036259">
    <property type="entry name" value="MFS_trans_sf"/>
</dbReference>
<dbReference type="PANTHER" id="PTHR16172">
    <property type="entry name" value="MAJOR FACILITATOR SUPERFAMILY DOMAIN-CONTAINING PROTEIN 6-LIKE"/>
    <property type="match status" value="1"/>
</dbReference>
<dbReference type="PANTHER" id="PTHR16172:SF41">
    <property type="entry name" value="MAJOR FACILITATOR SUPERFAMILY DOMAIN-CONTAINING PROTEIN 6-LIKE"/>
    <property type="match status" value="1"/>
</dbReference>
<dbReference type="Pfam" id="PF12832">
    <property type="entry name" value="MFS_1_like"/>
    <property type="match status" value="1"/>
</dbReference>
<dbReference type="SUPFAM" id="SSF103473">
    <property type="entry name" value="MFS general substrate transporter"/>
    <property type="match status" value="1"/>
</dbReference>
<proteinExistence type="evidence at transcript level"/>
<gene>
    <name type="primary">mfsd6l-b</name>
</gene>